<comment type="function">
    <text>Plant lipoxygenase may be involved in a number of diverse aspects of plant physiology including growth and development, pest resistance, and senescence or responses to wounding. This enzyme exhibits linoleate 13-lipoxygenase activity.</text>
</comment>
<comment type="catalytic activity">
    <reaction>
        <text>(9Z,12Z)-octadecadienoate + O2 = (13S)-hydroperoxy-(9Z,11E)-octadecadienoate</text>
        <dbReference type="Rhea" id="RHEA:22780"/>
        <dbReference type="ChEBI" id="CHEBI:15379"/>
        <dbReference type="ChEBI" id="CHEBI:30245"/>
        <dbReference type="ChEBI" id="CHEBI:57466"/>
        <dbReference type="EC" id="1.13.11.12"/>
    </reaction>
</comment>
<comment type="catalytic activity">
    <reaction>
        <text>(9Z,12Z,15Z)-octadecatrienoate + O2 = (13S)-hydroperoxy-(9Z,11E,15Z)-octadecatrienoate</text>
        <dbReference type="Rhea" id="RHEA:34495"/>
        <dbReference type="ChEBI" id="CHEBI:15379"/>
        <dbReference type="ChEBI" id="CHEBI:32387"/>
        <dbReference type="ChEBI" id="CHEBI:58757"/>
        <dbReference type="EC" id="1.13.11.12"/>
    </reaction>
</comment>
<comment type="cofactor">
    <cofactor evidence="3">
        <name>Fe cation</name>
        <dbReference type="ChEBI" id="CHEBI:24875"/>
    </cofactor>
    <text evidence="3">Binds 1 Fe cation per subunit. Iron is tightly bound.</text>
</comment>
<comment type="pathway">
    <text evidence="3">Lipid metabolism; oxylipin biosynthesis.</text>
</comment>
<comment type="subcellular location">
    <subcellularLocation>
        <location>Plastid</location>
        <location>Chloroplast</location>
    </subcellularLocation>
</comment>
<comment type="similarity">
    <text evidence="5">Belongs to the lipoxygenase family.</text>
</comment>
<feature type="transit peptide" description="Chloroplast" evidence="1">
    <location>
        <begin position="1"/>
        <end status="unknown"/>
    </location>
</feature>
<feature type="chain" id="PRO_0000018324" description="Lipoxygenase 2.2, chloroplastic">
    <location>
        <begin status="unknown"/>
        <end position="932"/>
    </location>
</feature>
<feature type="domain" description="PLAT" evidence="2">
    <location>
        <begin position="79"/>
        <end position="219"/>
    </location>
</feature>
<feature type="domain" description="Lipoxygenase" evidence="3">
    <location>
        <begin position="223"/>
        <end position="932"/>
    </location>
</feature>
<feature type="region of interest" description="Disordered" evidence="4">
    <location>
        <begin position="270"/>
        <end position="311"/>
    </location>
</feature>
<feature type="compositionally biased region" description="Basic and acidic residues" evidence="4">
    <location>
        <begin position="270"/>
        <end position="284"/>
    </location>
</feature>
<feature type="compositionally biased region" description="Basic residues" evidence="4">
    <location>
        <begin position="285"/>
        <end position="294"/>
    </location>
</feature>
<feature type="compositionally biased region" description="Basic and acidic residues" evidence="4">
    <location>
        <begin position="295"/>
        <end position="311"/>
    </location>
</feature>
<feature type="binding site" evidence="3">
    <location>
        <position position="588"/>
    </location>
    <ligand>
        <name>Fe cation</name>
        <dbReference type="ChEBI" id="CHEBI:24875"/>
        <note>catalytic</note>
    </ligand>
</feature>
<feature type="binding site" evidence="3">
    <location>
        <position position="593"/>
    </location>
    <ligand>
        <name>Fe cation</name>
        <dbReference type="ChEBI" id="CHEBI:24875"/>
        <note>catalytic</note>
    </ligand>
</feature>
<feature type="binding site" evidence="3">
    <location>
        <position position="778"/>
    </location>
    <ligand>
        <name>Fe cation</name>
        <dbReference type="ChEBI" id="CHEBI:24875"/>
        <note>catalytic</note>
    </ligand>
</feature>
<feature type="binding site" evidence="3">
    <location>
        <position position="782"/>
    </location>
    <ligand>
        <name>Fe cation</name>
        <dbReference type="ChEBI" id="CHEBI:24875"/>
        <note>catalytic</note>
    </ligand>
</feature>
<feature type="binding site" evidence="3">
    <location>
        <position position="932"/>
    </location>
    <ligand>
        <name>Fe cation</name>
        <dbReference type="ChEBI" id="CHEBI:24875"/>
        <note>catalytic</note>
    </ligand>
</feature>
<reference key="1">
    <citation type="journal article" date="2002" name="Biol. Chem.">
        <title>Jasmonate-induced lipid peroxidation in barley leaves initiated by distinct 13-LOX forms of the chloroplast.</title>
        <authorList>
            <person name="Bachmann A."/>
            <person name="Hause B."/>
            <person name="Maucher H."/>
            <person name="Garbe E."/>
            <person name="Voeroes K."/>
            <person name="Weichert H."/>
            <person name="Wasternack C."/>
            <person name="Feussner I."/>
        </authorList>
    </citation>
    <scope>NUCLEOTIDE SEQUENCE [MRNA]</scope>
    <scope>CHARACTERIZATION</scope>
    <source>
        <strain>cv. Salome</strain>
        <tissue>Leaf</tissue>
    </source>
</reference>
<accession>Q8GSM3</accession>
<dbReference type="EC" id="1.13.11.12"/>
<dbReference type="EMBL" id="AJ507212">
    <property type="protein sequence ID" value="CAD45186.1"/>
    <property type="molecule type" value="mRNA"/>
</dbReference>
<dbReference type="SMR" id="Q8GSM3"/>
<dbReference type="KEGG" id="ag:CAD45186"/>
<dbReference type="UniPathway" id="UPA00382"/>
<dbReference type="ExpressionAtlas" id="Q8GSM3">
    <property type="expression patterns" value="differential"/>
</dbReference>
<dbReference type="GO" id="GO:0009507">
    <property type="term" value="C:chloroplast"/>
    <property type="evidence" value="ECO:0007669"/>
    <property type="project" value="UniProtKB-SubCell"/>
</dbReference>
<dbReference type="GO" id="GO:0016165">
    <property type="term" value="F:linoleate 13S-lipoxygenase activity"/>
    <property type="evidence" value="ECO:0007669"/>
    <property type="project" value="UniProtKB-EC"/>
</dbReference>
<dbReference type="GO" id="GO:0046872">
    <property type="term" value="F:metal ion binding"/>
    <property type="evidence" value="ECO:0007669"/>
    <property type="project" value="UniProtKB-KW"/>
</dbReference>
<dbReference type="GO" id="GO:0006633">
    <property type="term" value="P:fatty acid biosynthetic process"/>
    <property type="evidence" value="ECO:0007669"/>
    <property type="project" value="UniProtKB-KW"/>
</dbReference>
<dbReference type="GO" id="GO:0034440">
    <property type="term" value="P:lipid oxidation"/>
    <property type="evidence" value="ECO:0007669"/>
    <property type="project" value="InterPro"/>
</dbReference>
<dbReference type="GO" id="GO:0031408">
    <property type="term" value="P:oxylipin biosynthetic process"/>
    <property type="evidence" value="ECO:0007669"/>
    <property type="project" value="UniProtKB-UniPathway"/>
</dbReference>
<dbReference type="CDD" id="cd01751">
    <property type="entry name" value="PLAT_LH2"/>
    <property type="match status" value="1"/>
</dbReference>
<dbReference type="FunFam" id="1.20.245.10:FF:000002">
    <property type="entry name" value="Lipoxygenase"/>
    <property type="match status" value="1"/>
</dbReference>
<dbReference type="FunFam" id="3.10.450.60:FF:000005">
    <property type="entry name" value="Lipoxygenase"/>
    <property type="match status" value="1"/>
</dbReference>
<dbReference type="Gene3D" id="3.10.450.60">
    <property type="match status" value="1"/>
</dbReference>
<dbReference type="Gene3D" id="4.10.375.10">
    <property type="entry name" value="Lipoxygenase-1, Domain 2"/>
    <property type="match status" value="1"/>
</dbReference>
<dbReference type="Gene3D" id="4.10.372.10">
    <property type="entry name" value="Lipoxygenase-1, Domain 3"/>
    <property type="match status" value="1"/>
</dbReference>
<dbReference type="Gene3D" id="1.20.245.10">
    <property type="entry name" value="Lipoxygenase-1, Domain 5"/>
    <property type="match status" value="1"/>
</dbReference>
<dbReference type="Gene3D" id="2.60.60.20">
    <property type="entry name" value="PLAT/LH2 domain"/>
    <property type="match status" value="1"/>
</dbReference>
<dbReference type="InterPro" id="IPR000907">
    <property type="entry name" value="LipOase"/>
</dbReference>
<dbReference type="InterPro" id="IPR013819">
    <property type="entry name" value="LipOase_C"/>
</dbReference>
<dbReference type="InterPro" id="IPR036226">
    <property type="entry name" value="LipOase_C_sf"/>
</dbReference>
<dbReference type="InterPro" id="IPR020834">
    <property type="entry name" value="LipOase_CS"/>
</dbReference>
<dbReference type="InterPro" id="IPR020833">
    <property type="entry name" value="LipOase_Fe_BS"/>
</dbReference>
<dbReference type="InterPro" id="IPR001246">
    <property type="entry name" value="LipOase_plant"/>
</dbReference>
<dbReference type="InterPro" id="IPR042057">
    <property type="entry name" value="Lipoxy_PLAT/LH2"/>
</dbReference>
<dbReference type="InterPro" id="IPR027433">
    <property type="entry name" value="Lipoxygenase_dom_3"/>
</dbReference>
<dbReference type="InterPro" id="IPR001024">
    <property type="entry name" value="PLAT/LH2_dom"/>
</dbReference>
<dbReference type="InterPro" id="IPR036392">
    <property type="entry name" value="PLAT/LH2_dom_sf"/>
</dbReference>
<dbReference type="PANTHER" id="PTHR11771">
    <property type="entry name" value="LIPOXYGENASE"/>
    <property type="match status" value="1"/>
</dbReference>
<dbReference type="Pfam" id="PF00305">
    <property type="entry name" value="Lipoxygenase"/>
    <property type="match status" value="1"/>
</dbReference>
<dbReference type="Pfam" id="PF01477">
    <property type="entry name" value="PLAT"/>
    <property type="match status" value="1"/>
</dbReference>
<dbReference type="PRINTS" id="PR00087">
    <property type="entry name" value="LIPOXYGENASE"/>
</dbReference>
<dbReference type="PRINTS" id="PR00468">
    <property type="entry name" value="PLTLPOXGNASE"/>
</dbReference>
<dbReference type="SMART" id="SM00308">
    <property type="entry name" value="LH2"/>
    <property type="match status" value="1"/>
</dbReference>
<dbReference type="SUPFAM" id="SSF49723">
    <property type="entry name" value="Lipase/lipooxygenase domain (PLAT/LH2 domain)"/>
    <property type="match status" value="1"/>
</dbReference>
<dbReference type="SUPFAM" id="SSF48484">
    <property type="entry name" value="Lipoxigenase"/>
    <property type="match status" value="1"/>
</dbReference>
<dbReference type="PROSITE" id="PS00711">
    <property type="entry name" value="LIPOXYGENASE_1"/>
    <property type="match status" value="1"/>
</dbReference>
<dbReference type="PROSITE" id="PS00081">
    <property type="entry name" value="LIPOXYGENASE_2"/>
    <property type="match status" value="1"/>
</dbReference>
<dbReference type="PROSITE" id="PS51393">
    <property type="entry name" value="LIPOXYGENASE_3"/>
    <property type="match status" value="1"/>
</dbReference>
<dbReference type="PROSITE" id="PS50095">
    <property type="entry name" value="PLAT"/>
    <property type="match status" value="1"/>
</dbReference>
<keyword id="KW-0150">Chloroplast</keyword>
<keyword id="KW-0223">Dioxygenase</keyword>
<keyword id="KW-0275">Fatty acid biosynthesis</keyword>
<keyword id="KW-0276">Fatty acid metabolism</keyword>
<keyword id="KW-0408">Iron</keyword>
<keyword id="KW-0444">Lipid biosynthesis</keyword>
<keyword id="KW-0443">Lipid metabolism</keyword>
<keyword id="KW-0479">Metal-binding</keyword>
<keyword id="KW-0560">Oxidoreductase</keyword>
<keyword id="KW-0925">Oxylipin biosynthesis</keyword>
<keyword id="KW-0934">Plastid</keyword>
<keyword id="KW-0809">Transit peptide</keyword>
<sequence length="932" mass="106493">MQTATKPLVGARAVPLSRRASFLVAEARRKPSTNARRTRVGSTSTTTTTTTILTDVNGPALTTVAKPGHQYDLKQTVEMKATVSVHMKSFWWSDEKKERARDWAYDLILGSWLTLELVSSELDPKTGQEHDVISGKLKHSRETEKDYDLYEAIFTCRHRLAPSGAVRLVNYHHTEMLLGEVKIFPAGEDPTKSSAVTLFHCQSWIDPSHCSPDKRTFFPVEKSYIPSQTPKGVEKLRKSELEALRGNGCGERKKHDRIYDYDVYNDLGKPESKRPVLGGKEHPYPRRCRTGRPRSKTDPSSEEESHKKGEMYVPRDETFTERKEQAFLTKQLLSQLHGLCTGLKVNKDILPSFPTLASIDALYDDDFRNQPVQPEGGKVRLILDLLAKELVHLVKLEGAEFVEGIRRVFKFETPEIHDMDKLAWFRDEEFARQTLAGMNPLSIQLVTELPIVSKLDELKYGPADSLITKELIEKQINRIMTAEEAVAQKKLFMLDYHDLLLPYVHRVRKLDNKTMYGSRTLFFLADDGTLRPIAIELTRPKSPHKQQWRKVFTPGSGYSGSVTGSWEWQLAKIHVLSHDTGYHQLVSHWLRTHCCVEPYVIAANRQLSQMHPIYRLLHPHFRFTMEINAQARGMLICADGIIEKTFSPGEFSMEISSAAYDKQWRFDMEALPEDLIRRGMAVRGEDGKLELAIEDYPYANDGLLVWDAIKQWASDYVAHYYPCAVDIVDDEELQDWWTEVRTKGHPDKQDEPWWPELDCHESLVQVLATIMWVTSAHHAAVNFGQYPMAGYVPNHPSIARRNMPCEMGPEEMLAFKAAPEKVWLDTLPSQLQTVMVMATLDLLSSHASDEEYMGTHQEPAWQRDGEVDKAFQVFQKKMRDIAEQVEEWNKDDSRRNRHGAGVVPYVLLRPLNGNPMDAKTVMEMGIPNSISI</sequence>
<protein>
    <recommendedName>
        <fullName>Lipoxygenase 2.2, chloroplastic</fullName>
        <ecNumber>1.13.11.12</ecNumber>
    </recommendedName>
    <alternativeName>
        <fullName>LOX2:Hv:2</fullName>
    </alternativeName>
</protein>
<gene>
    <name type="primary">LOX2.2</name>
</gene>
<organism>
    <name type="scientific">Hordeum vulgare</name>
    <name type="common">Barley</name>
    <dbReference type="NCBI Taxonomy" id="4513"/>
    <lineage>
        <taxon>Eukaryota</taxon>
        <taxon>Viridiplantae</taxon>
        <taxon>Streptophyta</taxon>
        <taxon>Embryophyta</taxon>
        <taxon>Tracheophyta</taxon>
        <taxon>Spermatophyta</taxon>
        <taxon>Magnoliopsida</taxon>
        <taxon>Liliopsida</taxon>
        <taxon>Poales</taxon>
        <taxon>Poaceae</taxon>
        <taxon>BOP clade</taxon>
        <taxon>Pooideae</taxon>
        <taxon>Triticodae</taxon>
        <taxon>Triticeae</taxon>
        <taxon>Hordeinae</taxon>
        <taxon>Hordeum</taxon>
    </lineage>
</organism>
<name>LOX22_HORVU</name>
<evidence type="ECO:0000255" key="1"/>
<evidence type="ECO:0000255" key="2">
    <source>
        <dbReference type="PROSITE-ProRule" id="PRU00152"/>
    </source>
</evidence>
<evidence type="ECO:0000255" key="3">
    <source>
        <dbReference type="PROSITE-ProRule" id="PRU00726"/>
    </source>
</evidence>
<evidence type="ECO:0000256" key="4">
    <source>
        <dbReference type="SAM" id="MobiDB-lite"/>
    </source>
</evidence>
<evidence type="ECO:0000305" key="5"/>
<proteinExistence type="evidence at protein level"/>